<sequence length="408" mass="48392">MTSPDERKSFWERHEFKFYRYGHVYALIYGQVVIDYVPQRALKRGVKVLLIAYGHLFSMLLIVVLPGYFCYHFRTLTDTLDRRLQLLFYVSFTNTAIKYATVIVTYVANTVHFEAINQRCTMQRTHLEFEFKNAPQEPKRPFEFFMYFKFCLINLMMMIQVCGIFAQYGEVGKGSVSQVRVHFAIYAFVLWNYTENMADYCYFINGSVLKYYRQFNLQLGSLRDEMDGLRPGGMLLHHCCELSDRLEELRRRCREIHDLQRESFRMHQFQLIGLMLSTLINNLTNFYTLFHMLAKQSLEEVSYPVVVGSVYATGFYIDTYIVALINEHIKLELEAVALTMRRFAEPREMDERLTREIEHLSLELLNYQPPMLCGLLHLDRRLVYLIAVTAFSYFITLVQFDLYLRKKS</sequence>
<comment type="function">
    <text evidence="1">Probable gustatory receptor which mediates acceptance or avoidance behavior, depending on its substrates.</text>
</comment>
<comment type="subcellular location">
    <subcellularLocation>
        <location evidence="1">Cell membrane</location>
        <topology evidence="1">Multi-pass membrane protein</topology>
    </subcellularLocation>
</comment>
<comment type="tissue specificity">
    <text evidence="3 4">Expressed in the medial aspect of the third antennal segment, and in neurons of the terminal external chemosensory organ of larvae.</text>
</comment>
<comment type="similarity">
    <text evidence="5">Belongs to the insect chemoreceptor superfamily. Gustatory receptor (GR) family. Gr10a subfamily.</text>
</comment>
<keyword id="KW-1003">Cell membrane</keyword>
<keyword id="KW-0472">Membrane</keyword>
<keyword id="KW-0675">Receptor</keyword>
<keyword id="KW-1185">Reference proteome</keyword>
<keyword id="KW-0807">Transducer</keyword>
<keyword id="KW-0812">Transmembrane</keyword>
<keyword id="KW-1133">Transmembrane helix</keyword>
<gene>
    <name type="primary">Gr10a</name>
    <name type="ORF">CG32664</name>
</gene>
<accession>P58950</accession>
<accession>A1C3K6</accession>
<dbReference type="EMBL" id="DQ989010">
    <property type="protein sequence ID" value="ABK97611.1"/>
    <property type="molecule type" value="mRNA"/>
</dbReference>
<dbReference type="EMBL" id="AE014298">
    <property type="protein sequence ID" value="AAN09631.1"/>
    <property type="molecule type" value="Genomic_DNA"/>
</dbReference>
<dbReference type="RefSeq" id="NP_727523.1">
    <property type="nucleotide sequence ID" value="NM_167283.3"/>
</dbReference>
<dbReference type="SMR" id="P58950"/>
<dbReference type="FunCoup" id="P58950">
    <property type="interactions" value="16"/>
</dbReference>
<dbReference type="STRING" id="7227.FBpp0312371"/>
<dbReference type="PaxDb" id="7227-FBpp0073394"/>
<dbReference type="EnsemblMetazoa" id="FBtr0346793">
    <property type="protein sequence ID" value="FBpp0312371"/>
    <property type="gene ID" value="FBgn0045502"/>
</dbReference>
<dbReference type="GeneID" id="117501"/>
<dbReference type="KEGG" id="dme:Dmel_CG32664"/>
<dbReference type="AGR" id="FB:FBgn0045502"/>
<dbReference type="CTD" id="117501"/>
<dbReference type="FlyBase" id="FBgn0045502">
    <property type="gene designation" value="Gr10a"/>
</dbReference>
<dbReference type="VEuPathDB" id="VectorBase:FBgn0045502"/>
<dbReference type="eggNOG" id="ENOG502T8FD">
    <property type="taxonomic scope" value="Eukaryota"/>
</dbReference>
<dbReference type="HOGENOM" id="CLU_055520_0_0_1"/>
<dbReference type="InParanoid" id="P58950"/>
<dbReference type="OMA" id="HQFQLLG"/>
<dbReference type="OrthoDB" id="8021733at2759"/>
<dbReference type="PhylomeDB" id="P58950"/>
<dbReference type="BioGRID-ORCS" id="117501">
    <property type="hits" value="0 hits in 1 CRISPR screen"/>
</dbReference>
<dbReference type="GenomeRNAi" id="117501"/>
<dbReference type="PRO" id="PR:P58950"/>
<dbReference type="Proteomes" id="UP000000803">
    <property type="component" value="Chromosome X"/>
</dbReference>
<dbReference type="Bgee" id="FBgn0045502">
    <property type="expression patterns" value="Expressed in olfactory receptor neuron (Drosophila) and 1 other cell type or tissue"/>
</dbReference>
<dbReference type="GO" id="GO:0030424">
    <property type="term" value="C:axon"/>
    <property type="evidence" value="ECO:0000318"/>
    <property type="project" value="GO_Central"/>
</dbReference>
<dbReference type="GO" id="GO:0030425">
    <property type="term" value="C:dendrite"/>
    <property type="evidence" value="ECO:0000318"/>
    <property type="project" value="GO_Central"/>
</dbReference>
<dbReference type="GO" id="GO:0016020">
    <property type="term" value="C:membrane"/>
    <property type="evidence" value="ECO:0000303"/>
    <property type="project" value="UniProtKB"/>
</dbReference>
<dbReference type="GO" id="GO:0043025">
    <property type="term" value="C:neuronal cell body"/>
    <property type="evidence" value="ECO:0000318"/>
    <property type="project" value="GO_Central"/>
</dbReference>
<dbReference type="GO" id="GO:0005886">
    <property type="term" value="C:plasma membrane"/>
    <property type="evidence" value="ECO:0000250"/>
    <property type="project" value="FlyBase"/>
</dbReference>
<dbReference type="GO" id="GO:0015276">
    <property type="term" value="F:ligand-gated monoatomic ion channel activity"/>
    <property type="evidence" value="ECO:0000250"/>
    <property type="project" value="FlyBase"/>
</dbReference>
<dbReference type="GO" id="GO:0008527">
    <property type="term" value="F:taste receptor activity"/>
    <property type="evidence" value="ECO:0000303"/>
    <property type="project" value="UniProtKB"/>
</dbReference>
<dbReference type="GO" id="GO:0034220">
    <property type="term" value="P:monoatomic ion transmembrane transport"/>
    <property type="evidence" value="ECO:0000250"/>
    <property type="project" value="FlyBase"/>
</dbReference>
<dbReference type="GO" id="GO:0050909">
    <property type="term" value="P:sensory perception of taste"/>
    <property type="evidence" value="ECO:0000303"/>
    <property type="project" value="UniProtKB"/>
</dbReference>
<dbReference type="GO" id="GO:0007165">
    <property type="term" value="P:signal transduction"/>
    <property type="evidence" value="ECO:0007669"/>
    <property type="project" value="UniProtKB-KW"/>
</dbReference>
<dbReference type="InterPro" id="IPR013604">
    <property type="entry name" value="7TM_chemorcpt"/>
</dbReference>
<dbReference type="Pfam" id="PF08395">
    <property type="entry name" value="7tm_7"/>
    <property type="match status" value="1"/>
</dbReference>
<organism>
    <name type="scientific">Drosophila melanogaster</name>
    <name type="common">Fruit fly</name>
    <dbReference type="NCBI Taxonomy" id="7227"/>
    <lineage>
        <taxon>Eukaryota</taxon>
        <taxon>Metazoa</taxon>
        <taxon>Ecdysozoa</taxon>
        <taxon>Arthropoda</taxon>
        <taxon>Hexapoda</taxon>
        <taxon>Insecta</taxon>
        <taxon>Pterygota</taxon>
        <taxon>Neoptera</taxon>
        <taxon>Endopterygota</taxon>
        <taxon>Diptera</taxon>
        <taxon>Brachycera</taxon>
        <taxon>Muscomorpha</taxon>
        <taxon>Ephydroidea</taxon>
        <taxon>Drosophilidae</taxon>
        <taxon>Drosophila</taxon>
        <taxon>Sophophora</taxon>
    </lineage>
</organism>
<name>GR10A_DROME</name>
<feature type="chain" id="PRO_0000216490" description="Gustatory receptor 10a">
    <location>
        <begin position="1"/>
        <end position="408"/>
    </location>
</feature>
<feature type="topological domain" description="Cytoplasmic" evidence="1">
    <location>
        <begin position="1"/>
        <end position="20"/>
    </location>
</feature>
<feature type="transmembrane region" description="Helical; Name=1" evidence="2">
    <location>
        <begin position="21"/>
        <end position="38"/>
    </location>
</feature>
<feature type="topological domain" description="Extracellular" evidence="1">
    <location>
        <begin position="39"/>
        <end position="48"/>
    </location>
</feature>
<feature type="transmembrane region" description="Helical; Name=2" evidence="2">
    <location>
        <begin position="49"/>
        <end position="69"/>
    </location>
</feature>
<feature type="topological domain" description="Cytoplasmic" evidence="1">
    <location>
        <begin position="70"/>
        <end position="86"/>
    </location>
</feature>
<feature type="transmembrane region" description="Helical; Name=3" evidence="2">
    <location>
        <begin position="87"/>
        <end position="107"/>
    </location>
</feature>
<feature type="topological domain" description="Extracellular" evidence="1">
    <location>
        <begin position="108"/>
        <end position="144"/>
    </location>
</feature>
<feature type="transmembrane region" description="Helical; Name=4" evidence="2">
    <location>
        <begin position="145"/>
        <end position="165"/>
    </location>
</feature>
<feature type="topological domain" description="Cytoplasmic" evidence="1">
    <location>
        <begin position="166"/>
        <end position="270"/>
    </location>
</feature>
<feature type="transmembrane region" description="Helical; Name=5" evidence="2">
    <location>
        <begin position="271"/>
        <end position="291"/>
    </location>
</feature>
<feature type="topological domain" description="Extracellular" evidence="1">
    <location>
        <begin position="292"/>
        <end position="304"/>
    </location>
</feature>
<feature type="transmembrane region" description="Helical; Name=6" evidence="2">
    <location>
        <begin position="305"/>
        <end position="325"/>
    </location>
</feature>
<feature type="topological domain" description="Cytoplasmic" evidence="1">
    <location>
        <begin position="326"/>
        <end position="381"/>
    </location>
</feature>
<feature type="transmembrane region" description="Helical; Name=7" evidence="2">
    <location>
        <begin position="382"/>
        <end position="402"/>
    </location>
</feature>
<feature type="topological domain" description="Extracellular" evidence="1">
    <location>
        <begin position="403"/>
        <end position="408"/>
    </location>
</feature>
<reference key="1">
    <citation type="journal article" date="2007" name="Nature">
        <title>Two chemosensory receptors together mediate carbon dioxide detection in Drosophila.</title>
        <authorList>
            <person name="Jones W.D."/>
            <person name="Cayirlioglu P."/>
            <person name="Grunwald Kadow I."/>
            <person name="Vosshall L.B."/>
        </authorList>
    </citation>
    <scope>NUCLEOTIDE SEQUENCE [MRNA]</scope>
    <source>
        <strain>Oregon-R</strain>
        <tissue>Antenna</tissue>
    </source>
</reference>
<reference key="2">
    <citation type="journal article" date="2000" name="Science">
        <title>The genome sequence of Drosophila melanogaster.</title>
        <authorList>
            <person name="Adams M.D."/>
            <person name="Celniker S.E."/>
            <person name="Holt R.A."/>
            <person name="Evans C.A."/>
            <person name="Gocayne J.D."/>
            <person name="Amanatides P.G."/>
            <person name="Scherer S.E."/>
            <person name="Li P.W."/>
            <person name="Hoskins R.A."/>
            <person name="Galle R.F."/>
            <person name="George R.A."/>
            <person name="Lewis S.E."/>
            <person name="Richards S."/>
            <person name="Ashburner M."/>
            <person name="Henderson S.N."/>
            <person name="Sutton G.G."/>
            <person name="Wortman J.R."/>
            <person name="Yandell M.D."/>
            <person name="Zhang Q."/>
            <person name="Chen L.X."/>
            <person name="Brandon R.C."/>
            <person name="Rogers Y.-H.C."/>
            <person name="Blazej R.G."/>
            <person name="Champe M."/>
            <person name="Pfeiffer B.D."/>
            <person name="Wan K.H."/>
            <person name="Doyle C."/>
            <person name="Baxter E.G."/>
            <person name="Helt G."/>
            <person name="Nelson C.R."/>
            <person name="Miklos G.L.G."/>
            <person name="Abril J.F."/>
            <person name="Agbayani A."/>
            <person name="An H.-J."/>
            <person name="Andrews-Pfannkoch C."/>
            <person name="Baldwin D."/>
            <person name="Ballew R.M."/>
            <person name="Basu A."/>
            <person name="Baxendale J."/>
            <person name="Bayraktaroglu L."/>
            <person name="Beasley E.M."/>
            <person name="Beeson K.Y."/>
            <person name="Benos P.V."/>
            <person name="Berman B.P."/>
            <person name="Bhandari D."/>
            <person name="Bolshakov S."/>
            <person name="Borkova D."/>
            <person name="Botchan M.R."/>
            <person name="Bouck J."/>
            <person name="Brokstein P."/>
            <person name="Brottier P."/>
            <person name="Burtis K.C."/>
            <person name="Busam D.A."/>
            <person name="Butler H."/>
            <person name="Cadieu E."/>
            <person name="Center A."/>
            <person name="Chandra I."/>
            <person name="Cherry J.M."/>
            <person name="Cawley S."/>
            <person name="Dahlke C."/>
            <person name="Davenport L.B."/>
            <person name="Davies P."/>
            <person name="de Pablos B."/>
            <person name="Delcher A."/>
            <person name="Deng Z."/>
            <person name="Mays A.D."/>
            <person name="Dew I."/>
            <person name="Dietz S.M."/>
            <person name="Dodson K."/>
            <person name="Doup L.E."/>
            <person name="Downes M."/>
            <person name="Dugan-Rocha S."/>
            <person name="Dunkov B.C."/>
            <person name="Dunn P."/>
            <person name="Durbin K.J."/>
            <person name="Evangelista C.C."/>
            <person name="Ferraz C."/>
            <person name="Ferriera S."/>
            <person name="Fleischmann W."/>
            <person name="Fosler C."/>
            <person name="Gabrielian A.E."/>
            <person name="Garg N.S."/>
            <person name="Gelbart W.M."/>
            <person name="Glasser K."/>
            <person name="Glodek A."/>
            <person name="Gong F."/>
            <person name="Gorrell J.H."/>
            <person name="Gu Z."/>
            <person name="Guan P."/>
            <person name="Harris M."/>
            <person name="Harris N.L."/>
            <person name="Harvey D.A."/>
            <person name="Heiman T.J."/>
            <person name="Hernandez J.R."/>
            <person name="Houck J."/>
            <person name="Hostin D."/>
            <person name="Houston K.A."/>
            <person name="Howland T.J."/>
            <person name="Wei M.-H."/>
            <person name="Ibegwam C."/>
            <person name="Jalali M."/>
            <person name="Kalush F."/>
            <person name="Karpen G.H."/>
            <person name="Ke Z."/>
            <person name="Kennison J.A."/>
            <person name="Ketchum K.A."/>
            <person name="Kimmel B.E."/>
            <person name="Kodira C.D."/>
            <person name="Kraft C.L."/>
            <person name="Kravitz S."/>
            <person name="Kulp D."/>
            <person name="Lai Z."/>
            <person name="Lasko P."/>
            <person name="Lei Y."/>
            <person name="Levitsky A.A."/>
            <person name="Li J.H."/>
            <person name="Li Z."/>
            <person name="Liang Y."/>
            <person name="Lin X."/>
            <person name="Liu X."/>
            <person name="Mattei B."/>
            <person name="McIntosh T.C."/>
            <person name="McLeod M.P."/>
            <person name="McPherson D."/>
            <person name="Merkulov G."/>
            <person name="Milshina N.V."/>
            <person name="Mobarry C."/>
            <person name="Morris J."/>
            <person name="Moshrefi A."/>
            <person name="Mount S.M."/>
            <person name="Moy M."/>
            <person name="Murphy B."/>
            <person name="Murphy L."/>
            <person name="Muzny D.M."/>
            <person name="Nelson D.L."/>
            <person name="Nelson D.R."/>
            <person name="Nelson K.A."/>
            <person name="Nixon K."/>
            <person name="Nusskern D.R."/>
            <person name="Pacleb J.M."/>
            <person name="Palazzolo M."/>
            <person name="Pittman G.S."/>
            <person name="Pan S."/>
            <person name="Pollard J."/>
            <person name="Puri V."/>
            <person name="Reese M.G."/>
            <person name="Reinert K."/>
            <person name="Remington K."/>
            <person name="Saunders R.D.C."/>
            <person name="Scheeler F."/>
            <person name="Shen H."/>
            <person name="Shue B.C."/>
            <person name="Siden-Kiamos I."/>
            <person name="Simpson M."/>
            <person name="Skupski M.P."/>
            <person name="Smith T.J."/>
            <person name="Spier E."/>
            <person name="Spradling A.C."/>
            <person name="Stapleton M."/>
            <person name="Strong R."/>
            <person name="Sun E."/>
            <person name="Svirskas R."/>
            <person name="Tector C."/>
            <person name="Turner R."/>
            <person name="Venter E."/>
            <person name="Wang A.H."/>
            <person name="Wang X."/>
            <person name="Wang Z.-Y."/>
            <person name="Wassarman D.A."/>
            <person name="Weinstock G.M."/>
            <person name="Weissenbach J."/>
            <person name="Williams S.M."/>
            <person name="Woodage T."/>
            <person name="Worley K.C."/>
            <person name="Wu D."/>
            <person name="Yang S."/>
            <person name="Yao Q.A."/>
            <person name="Ye J."/>
            <person name="Yeh R.-F."/>
            <person name="Zaveri J.S."/>
            <person name="Zhan M."/>
            <person name="Zhang G."/>
            <person name="Zhao Q."/>
            <person name="Zheng L."/>
            <person name="Zheng X.H."/>
            <person name="Zhong F.N."/>
            <person name="Zhong W."/>
            <person name="Zhou X."/>
            <person name="Zhu S.C."/>
            <person name="Zhu X."/>
            <person name="Smith H.O."/>
            <person name="Gibbs R.A."/>
            <person name="Myers E.W."/>
            <person name="Rubin G.M."/>
            <person name="Venter J.C."/>
        </authorList>
    </citation>
    <scope>NUCLEOTIDE SEQUENCE [LARGE SCALE GENOMIC DNA]</scope>
    <source>
        <strain>Berkeley</strain>
    </source>
</reference>
<reference key="3">
    <citation type="journal article" date="2002" name="Genome Biol.">
        <title>Annotation of the Drosophila melanogaster euchromatic genome: a systematic review.</title>
        <authorList>
            <person name="Misra S."/>
            <person name="Crosby M.A."/>
            <person name="Mungall C.J."/>
            <person name="Matthews B.B."/>
            <person name="Campbell K.S."/>
            <person name="Hradecky P."/>
            <person name="Huang Y."/>
            <person name="Kaminker J.S."/>
            <person name="Millburn G.H."/>
            <person name="Prochnik S.E."/>
            <person name="Smith C.D."/>
            <person name="Tupy J.L."/>
            <person name="Whitfield E.J."/>
            <person name="Bayraktaroglu L."/>
            <person name="Berman B.P."/>
            <person name="Bettencourt B.R."/>
            <person name="Celniker S.E."/>
            <person name="de Grey A.D.N.J."/>
            <person name="Drysdale R.A."/>
            <person name="Harris N.L."/>
            <person name="Richter J."/>
            <person name="Russo S."/>
            <person name="Schroeder A.J."/>
            <person name="Shu S.Q."/>
            <person name="Stapleton M."/>
            <person name="Yamada C."/>
            <person name="Ashburner M."/>
            <person name="Gelbart W.M."/>
            <person name="Rubin G.M."/>
            <person name="Lewis S.E."/>
        </authorList>
    </citation>
    <scope>GENOME REANNOTATION</scope>
    <source>
        <strain>Berkeley</strain>
    </source>
</reference>
<reference key="4">
    <citation type="journal article" date="2001" name="Cell">
        <title>A chemosensory gene family encoding candidate gustatory and olfactory receptors in Drosophila.</title>
        <authorList>
            <person name="Scott K."/>
            <person name="Brady R. Jr."/>
            <person name="Cravchik A."/>
            <person name="Morozov P."/>
            <person name="Rzhetsky A."/>
            <person name="Zuker C."/>
            <person name="Axel R."/>
        </authorList>
    </citation>
    <scope>TISSUE SPECIFICITY</scope>
</reference>
<reference key="5">
    <citation type="journal article" date="2001" name="Curr. Biol.">
        <title>Spatially restricted expression of candidate taste receptors in the Drosophila gustatory system.</title>
        <authorList>
            <person name="Dunipace L."/>
            <person name="Meister S."/>
            <person name="McNealy C."/>
            <person name="Amrein H."/>
        </authorList>
    </citation>
    <scope>IDENTIFICATION</scope>
</reference>
<reference key="6">
    <citation type="journal article" date="2011" name="J. Neurosci.">
        <title>Molecular and cellular organization of the taste system in the Drosophila larva.</title>
        <authorList>
            <person name="Kwon J.Y."/>
            <person name="Dahanukar A."/>
            <person name="Weiss L.A."/>
            <person name="Carlson J.R."/>
        </authorList>
    </citation>
    <scope>TISSUE SPECIFICITY</scope>
</reference>
<protein>
    <recommendedName>
        <fullName>Gustatory receptor 10a</fullName>
    </recommendedName>
</protein>
<evidence type="ECO:0000250" key="1"/>
<evidence type="ECO:0000255" key="2"/>
<evidence type="ECO:0000269" key="3">
    <source>
    </source>
</evidence>
<evidence type="ECO:0000269" key="4">
    <source>
    </source>
</evidence>
<evidence type="ECO:0000305" key="5"/>
<proteinExistence type="evidence at transcript level"/>